<feature type="chain" id="PRO_1000137038" description="Protein Syd">
    <location>
        <begin position="1"/>
        <end position="181"/>
    </location>
</feature>
<organism>
    <name type="scientific">Salmonella heidelberg (strain SL476)</name>
    <dbReference type="NCBI Taxonomy" id="454169"/>
    <lineage>
        <taxon>Bacteria</taxon>
        <taxon>Pseudomonadati</taxon>
        <taxon>Pseudomonadota</taxon>
        <taxon>Gammaproteobacteria</taxon>
        <taxon>Enterobacterales</taxon>
        <taxon>Enterobacteriaceae</taxon>
        <taxon>Salmonella</taxon>
    </lineage>
</organism>
<evidence type="ECO:0000255" key="1">
    <source>
        <dbReference type="HAMAP-Rule" id="MF_01104"/>
    </source>
</evidence>
<sequence>MDELTAQALKAFTTRYCDAWQEKHGSWPLSEELYGVPSPCIISSTRDAVYWQPQPFEGEENVNAVERAFDIMVQPALHAFYTTQFAGDMPAQFADEKLTLLQTWSQDDFRRVQENLIGHLVTQKRLKLPPTLFIATQENELEVISVCNLSGEVIKETLGTRNRTVLAATLAEFLTQLNPLL</sequence>
<reference key="1">
    <citation type="journal article" date="2011" name="J. Bacteriol.">
        <title>Comparative genomics of 28 Salmonella enterica isolates: evidence for CRISPR-mediated adaptive sublineage evolution.</title>
        <authorList>
            <person name="Fricke W.F."/>
            <person name="Mammel M.K."/>
            <person name="McDermott P.F."/>
            <person name="Tartera C."/>
            <person name="White D.G."/>
            <person name="Leclerc J.E."/>
            <person name="Ravel J."/>
            <person name="Cebula T.A."/>
        </authorList>
    </citation>
    <scope>NUCLEOTIDE SEQUENCE [LARGE SCALE GENOMIC DNA]</scope>
    <source>
        <strain>SL476</strain>
    </source>
</reference>
<proteinExistence type="inferred from homology"/>
<dbReference type="EMBL" id="CP001120">
    <property type="protein sequence ID" value="ACF69058.1"/>
    <property type="molecule type" value="Genomic_DNA"/>
</dbReference>
<dbReference type="RefSeq" id="WP_000343990.1">
    <property type="nucleotide sequence ID" value="NC_011083.1"/>
</dbReference>
<dbReference type="SMR" id="B4TG15"/>
<dbReference type="KEGG" id="seh:SeHA_C3174"/>
<dbReference type="HOGENOM" id="CLU_121866_0_0_6"/>
<dbReference type="Proteomes" id="UP000001866">
    <property type="component" value="Chromosome"/>
</dbReference>
<dbReference type="GO" id="GO:0009898">
    <property type="term" value="C:cytoplasmic side of plasma membrane"/>
    <property type="evidence" value="ECO:0007669"/>
    <property type="project" value="InterPro"/>
</dbReference>
<dbReference type="CDD" id="cd16323">
    <property type="entry name" value="Syd"/>
    <property type="match status" value="1"/>
</dbReference>
<dbReference type="Gene3D" id="3.40.1580.20">
    <property type="entry name" value="Syd protein"/>
    <property type="match status" value="1"/>
</dbReference>
<dbReference type="HAMAP" id="MF_01104">
    <property type="entry name" value="Syd"/>
    <property type="match status" value="1"/>
</dbReference>
<dbReference type="InterPro" id="IPR009948">
    <property type="entry name" value="Syd"/>
</dbReference>
<dbReference type="InterPro" id="IPR038228">
    <property type="entry name" value="Syd_sf"/>
</dbReference>
<dbReference type="NCBIfam" id="NF003439">
    <property type="entry name" value="PRK04968.1"/>
    <property type="match status" value="1"/>
</dbReference>
<dbReference type="Pfam" id="PF07348">
    <property type="entry name" value="Syd"/>
    <property type="match status" value="1"/>
</dbReference>
<protein>
    <recommendedName>
        <fullName evidence="1">Protein Syd</fullName>
    </recommendedName>
</protein>
<comment type="function">
    <text evidence="1">Interacts with the SecY protein in vivo. May bind preferentially to an uncomplexed state of SecY, thus functioning either as a chelating agent for excess SecY in the cell or as a regulatory factor that negatively controls the translocase function.</text>
</comment>
<comment type="subcellular location">
    <subcellularLocation>
        <location evidence="1">Cell inner membrane</location>
        <topology evidence="1">Peripheral membrane protein</topology>
        <orientation evidence="1">Cytoplasmic side</orientation>
    </subcellularLocation>
    <text evidence="1">Loosely associated with the cytoplasmic side of the inner membrane, probably via SecY.</text>
</comment>
<comment type="similarity">
    <text evidence="1">Belongs to the Syd family.</text>
</comment>
<name>SYDP_SALHS</name>
<gene>
    <name evidence="1" type="primary">syd</name>
    <name type="ordered locus">SeHA_C3174</name>
</gene>
<accession>B4TG15</accession>
<keyword id="KW-0997">Cell inner membrane</keyword>
<keyword id="KW-1003">Cell membrane</keyword>
<keyword id="KW-0472">Membrane</keyword>